<dbReference type="EC" id="1.2.1.10"/>
<dbReference type="EC" id="1.2.1.87"/>
<dbReference type="EMBL" id="AP008227">
    <property type="protein sequence ID" value="BAD72043.1"/>
    <property type="molecule type" value="Genomic_DNA"/>
</dbReference>
<dbReference type="RefSeq" id="WP_011229062.1">
    <property type="nucleotide sequence ID" value="NC_006462.1"/>
</dbReference>
<dbReference type="RefSeq" id="YP_145486.1">
    <property type="nucleotide sequence ID" value="NC_006462.1"/>
</dbReference>
<dbReference type="SMR" id="Q53WH9"/>
<dbReference type="EnsemblBacteria" id="BAD72043">
    <property type="protein sequence ID" value="BAD72043"/>
    <property type="gene ID" value="BAD72043"/>
</dbReference>
<dbReference type="GeneID" id="3169218"/>
<dbReference type="KEGG" id="ttj:TTHB247"/>
<dbReference type="PATRIC" id="fig|300852.9.peg.2203"/>
<dbReference type="HOGENOM" id="CLU_062208_0_0_0"/>
<dbReference type="PhylomeDB" id="Q53WH9"/>
<dbReference type="BRENDA" id="1.2.1.10">
    <property type="organism ID" value="2305"/>
</dbReference>
<dbReference type="BRENDA" id="1.2.1.87">
    <property type="organism ID" value="2305"/>
</dbReference>
<dbReference type="SABIO-RK" id="Q53WH9"/>
<dbReference type="Proteomes" id="UP000000532">
    <property type="component" value="Plasmid pTT27"/>
</dbReference>
<dbReference type="GO" id="GO:0008774">
    <property type="term" value="F:acetaldehyde dehydrogenase (acetylating) activity"/>
    <property type="evidence" value="ECO:0007669"/>
    <property type="project" value="UniProtKB-UniRule"/>
</dbReference>
<dbReference type="GO" id="GO:0051287">
    <property type="term" value="F:NAD binding"/>
    <property type="evidence" value="ECO:0007669"/>
    <property type="project" value="UniProtKB-UniRule"/>
</dbReference>
<dbReference type="GO" id="GO:0009056">
    <property type="term" value="P:catabolic process"/>
    <property type="evidence" value="ECO:0007669"/>
    <property type="project" value="UniProtKB-KW"/>
</dbReference>
<dbReference type="CDD" id="cd23933">
    <property type="entry name" value="ALDH_C"/>
    <property type="match status" value="1"/>
</dbReference>
<dbReference type="Gene3D" id="3.30.360.10">
    <property type="entry name" value="Dihydrodipicolinate Reductase, domain 2"/>
    <property type="match status" value="1"/>
</dbReference>
<dbReference type="Gene3D" id="3.40.50.720">
    <property type="entry name" value="NAD(P)-binding Rossmann-like Domain"/>
    <property type="match status" value="1"/>
</dbReference>
<dbReference type="HAMAP" id="MF_01657">
    <property type="entry name" value="Ac_ald_DH_ac"/>
    <property type="match status" value="1"/>
</dbReference>
<dbReference type="InterPro" id="IPR003361">
    <property type="entry name" value="Acetaldehyde_dehydrogenase"/>
</dbReference>
<dbReference type="InterPro" id="IPR015426">
    <property type="entry name" value="Acetylaldehyde_DH_C"/>
</dbReference>
<dbReference type="InterPro" id="IPR036291">
    <property type="entry name" value="NAD(P)-bd_dom_sf"/>
</dbReference>
<dbReference type="InterPro" id="IPR000534">
    <property type="entry name" value="Semialdehyde_DH_NAD-bd"/>
</dbReference>
<dbReference type="NCBIfam" id="TIGR03215">
    <property type="entry name" value="ac_ald_DH_ac"/>
    <property type="match status" value="1"/>
</dbReference>
<dbReference type="NCBIfam" id="NF006157">
    <property type="entry name" value="PRK08300.1"/>
    <property type="match status" value="1"/>
</dbReference>
<dbReference type="Pfam" id="PF09290">
    <property type="entry name" value="AcetDehyd-dimer"/>
    <property type="match status" value="1"/>
</dbReference>
<dbReference type="Pfam" id="PF01118">
    <property type="entry name" value="Semialdhyde_dh"/>
    <property type="match status" value="1"/>
</dbReference>
<dbReference type="PIRSF" id="PIRSF015689">
    <property type="entry name" value="Actaldh_dh_actl"/>
    <property type="match status" value="1"/>
</dbReference>
<dbReference type="SMART" id="SM00859">
    <property type="entry name" value="Semialdhyde_dh"/>
    <property type="match status" value="1"/>
</dbReference>
<dbReference type="SUPFAM" id="SSF55347">
    <property type="entry name" value="Glyceraldehyde-3-phosphate dehydrogenase-like, C-terminal domain"/>
    <property type="match status" value="1"/>
</dbReference>
<dbReference type="SUPFAM" id="SSF51735">
    <property type="entry name" value="NAD(P)-binding Rossmann-fold domains"/>
    <property type="match status" value="1"/>
</dbReference>
<evidence type="ECO:0000255" key="1">
    <source>
        <dbReference type="HAMAP-Rule" id="MF_01657"/>
    </source>
</evidence>
<evidence type="ECO:0000269" key="2">
    <source>
    </source>
</evidence>
<evidence type="ECO:0000305" key="3"/>
<name>ACDH_THET8</name>
<reference key="1">
    <citation type="submission" date="2004-11" db="EMBL/GenBank/DDBJ databases">
        <title>Complete genome sequence of Thermus thermophilus HB8.</title>
        <authorList>
            <person name="Masui R."/>
            <person name="Kurokawa K."/>
            <person name="Nakagawa N."/>
            <person name="Tokunaga F."/>
            <person name="Koyama Y."/>
            <person name="Shibata T."/>
            <person name="Oshima T."/>
            <person name="Yokoyama S."/>
            <person name="Yasunaga T."/>
            <person name="Kuramitsu S."/>
        </authorList>
    </citation>
    <scope>NUCLEOTIDE SEQUENCE [LARGE SCALE GENOMIC DNA]</scope>
    <source>
        <strain>ATCC 27634 / DSM 579 / HB8</strain>
    </source>
</reference>
<reference key="2">
    <citation type="journal article" date="2012" name="Biochemistry">
        <title>Protein-protein interactions and substrate channeling in orthologous and chimeric aldolase-dehydrogenase complexes.</title>
        <authorList>
            <person name="Baker P."/>
            <person name="Hillis C."/>
            <person name="Carere J."/>
            <person name="Seah S.Y."/>
        </authorList>
    </citation>
    <scope>FUNCTION</scope>
    <scope>CATALYTIC ACTIVITY</scope>
    <scope>BIOPHYSICOCHEMICAL PROPERTIES</scope>
    <scope>SUBSTRATE SPECIFICITY</scope>
    <scope>SUBUNIT</scope>
    <scope>COMPLEX WITH TTHB246</scope>
    <scope>ALDEHYDE CHANNELING</scope>
    <source>
        <strain>ATCC 27634 / DSM 579 / HB8</strain>
    </source>
</reference>
<comment type="function">
    <text evidence="2">Catalyzes the conversion of acetaldehyde or propanal to acetyl-CoA or propanoyl-CoA, respectively, using NAD(+) and coenzyme A. The aldehyde substrates can be directly channeled from the aldolase TTHB246 to the dehydrogenase TTHB247. Is the final enzyme in the meta-cleavage pathway for the degradation of aromatic compounds.</text>
</comment>
<comment type="catalytic activity">
    <reaction evidence="2">
        <text>acetaldehyde + NAD(+) + CoA = acetyl-CoA + NADH + H(+)</text>
        <dbReference type="Rhea" id="RHEA:23288"/>
        <dbReference type="ChEBI" id="CHEBI:15343"/>
        <dbReference type="ChEBI" id="CHEBI:15378"/>
        <dbReference type="ChEBI" id="CHEBI:57287"/>
        <dbReference type="ChEBI" id="CHEBI:57288"/>
        <dbReference type="ChEBI" id="CHEBI:57540"/>
        <dbReference type="ChEBI" id="CHEBI:57945"/>
        <dbReference type="EC" id="1.2.1.10"/>
    </reaction>
</comment>
<comment type="catalytic activity">
    <reaction evidence="2">
        <text>propanal + NAD(+) + CoA = propanoyl-CoA + NADH + H(+)</text>
        <dbReference type="Rhea" id="RHEA:36027"/>
        <dbReference type="ChEBI" id="CHEBI:15378"/>
        <dbReference type="ChEBI" id="CHEBI:17153"/>
        <dbReference type="ChEBI" id="CHEBI:57287"/>
        <dbReference type="ChEBI" id="CHEBI:57392"/>
        <dbReference type="ChEBI" id="CHEBI:57540"/>
        <dbReference type="ChEBI" id="CHEBI:57945"/>
        <dbReference type="EC" id="1.2.1.87"/>
    </reaction>
</comment>
<comment type="biophysicochemical properties">
    <kinetics>
        <KM evidence="2">5.5 mM for acetaldehyde (at pH 8 and 25 degrees Celsius)</KM>
        <KM evidence="2">6.4 mM for propanaldehyde (at pH 8 and 25 degrees Celsius)</KM>
        <KM evidence="2">15.4 mM for acetaldehyde (when TTHB247 is in complex with the aldolase TTHB246, at pH 8 and 25 degrees Celsius)</KM>
        <KM evidence="2">16.1 mM for propanaldehyde (when TTHB247 is in complex with the aldolase TTHB246, at pH 8 and 25 degrees Celsius)</KM>
        <text>The catalytic efficiency is similar when using acetaldehyde or propanaldehyde as substrate.</text>
    </kinetics>
    <temperatureDependence>
        <text evidence="2">Has a half-life of only 1.6 hours at 50 degrees Celsius. When TTHB247 is in complex with TTHB246, its half-life is increased by approximately 4 hours.</text>
    </temperatureDependence>
</comment>
<comment type="subunit">
    <text evidence="2">Monomer. Can also form a heterotetramer composed of two aldolase (TTHB246) and two dehydrogenase (TTHB247) subunits. Upon complex formation, the aldolase shows a 5-fold increase in substrate affinity, while the dehydrogenase shows a 3-fold decrease; the kcat values of each enzyme are reduced by 2-fold when they are in a complex.</text>
</comment>
<comment type="similarity">
    <text evidence="3">Belongs to the acetaldehyde dehydrogenase family.</text>
</comment>
<keyword id="KW-0058">Aromatic hydrocarbons catabolism</keyword>
<keyword id="KW-0520">NAD</keyword>
<keyword id="KW-0560">Oxidoreductase</keyword>
<keyword id="KW-0614">Plasmid</keyword>
<keyword id="KW-1185">Reference proteome</keyword>
<feature type="chain" id="PRO_0000387749" description="Acetaldehyde dehydrogenase">
    <location>
        <begin position="1"/>
        <end position="307"/>
    </location>
</feature>
<feature type="active site" description="Acyl-thioester intermediate" evidence="1">
    <location>
        <position position="127"/>
    </location>
</feature>
<feature type="binding site" evidence="1">
    <location>
        <begin position="12"/>
        <end position="15"/>
    </location>
    <ligand>
        <name>NAD(+)</name>
        <dbReference type="ChEBI" id="CHEBI:57540"/>
    </ligand>
</feature>
<feature type="binding site" evidence="1">
    <location>
        <begin position="158"/>
        <end position="166"/>
    </location>
    <ligand>
        <name>NAD(+)</name>
        <dbReference type="ChEBI" id="CHEBI:57540"/>
    </ligand>
</feature>
<feature type="binding site" evidence="1">
    <location>
        <position position="278"/>
    </location>
    <ligand>
        <name>NAD(+)</name>
        <dbReference type="ChEBI" id="CHEBI:57540"/>
    </ligand>
</feature>
<geneLocation type="plasmid">
    <name>pTT27</name>
</geneLocation>
<protein>
    <recommendedName>
        <fullName>Acetaldehyde dehydrogenase</fullName>
        <ecNumber>1.2.1.10</ecNumber>
    </recommendedName>
    <alternativeName>
        <fullName>Acetaldehyde dehydrogenase [acetylating]</fullName>
    </alternativeName>
    <alternativeName>
        <fullName>Propanal dehydrogenase (CoA-propanoylating)</fullName>
        <ecNumber>1.2.1.87</ecNumber>
    </alternativeName>
    <alternativeName>
        <fullName>Propanaldehyde dehydrogenase</fullName>
    </alternativeName>
</protein>
<sequence>MSERVKVAILGSGNIGTDLMYKLLKNPGHMELVAVVGIDPKSEGLARARALGLEASHEGIAYILERPEIKIVFDATSAKAHVRHAKLLREAGKIAIDLTPAARGPYVVPPVNLKEHLDKDNVNLITCGGQATIPLVYAVHRVAPVLYAEMVSTVASRSAGPGTRQNIDEFTFTTARGLEAIGGAKKGKAIIILNPAEPPILMTNTVRCIPEDEGFDREAVVASVRAMEREVQAYVPGYRLKADPVFERLPTPWGERTVVSMLLEVEGAGDYLPKYAGNLDIMTASARRVGEVFAQHLLGKPVEEVVA</sequence>
<proteinExistence type="evidence at protein level"/>
<accession>Q53WH9</accession>
<organism>
    <name type="scientific">Thermus thermophilus (strain ATCC 27634 / DSM 579 / HB8)</name>
    <dbReference type="NCBI Taxonomy" id="300852"/>
    <lineage>
        <taxon>Bacteria</taxon>
        <taxon>Thermotogati</taxon>
        <taxon>Deinococcota</taxon>
        <taxon>Deinococci</taxon>
        <taxon>Thermales</taxon>
        <taxon>Thermaceae</taxon>
        <taxon>Thermus</taxon>
    </lineage>
</organism>
<gene>
    <name type="ordered locus">TTHB247</name>
</gene>